<protein>
    <recommendedName>
        <fullName evidence="1">Large ribosomal subunit protein eL22z</fullName>
    </recommendedName>
    <alternativeName>
        <fullName>60S ribosomal protein L22-2</fullName>
    </alternativeName>
</protein>
<keyword id="KW-1185">Reference proteome</keyword>
<keyword id="KW-0687">Ribonucleoprotein</keyword>
<keyword id="KW-0689">Ribosomal protein</keyword>
<sequence>MSRGGAAVAKGKKKGVSFTIDCSKPVDDKIMEIASLEKFLQERIKVGGKAGALGDSVTITREKSKITVTADGQFSKRYLKYLTKKYLKKHNVRDWLRVIAANKDRNLYELRYFNIAENEGEEED</sequence>
<feature type="chain" id="PRO_0000215511" description="Large ribosomal subunit protein eL22z">
    <location>
        <begin position="1"/>
        <end position="124"/>
    </location>
</feature>
<reference key="1">
    <citation type="journal article" date="2000" name="Nature">
        <title>Sequence and analysis of chromosome 3 of the plant Arabidopsis thaliana.</title>
        <authorList>
            <person name="Salanoubat M."/>
            <person name="Lemcke K."/>
            <person name="Rieger M."/>
            <person name="Ansorge W."/>
            <person name="Unseld M."/>
            <person name="Fartmann B."/>
            <person name="Valle G."/>
            <person name="Bloecker H."/>
            <person name="Perez-Alonso M."/>
            <person name="Obermaier B."/>
            <person name="Delseny M."/>
            <person name="Boutry M."/>
            <person name="Grivell L.A."/>
            <person name="Mache R."/>
            <person name="Puigdomenech P."/>
            <person name="De Simone V."/>
            <person name="Choisne N."/>
            <person name="Artiguenave F."/>
            <person name="Robert C."/>
            <person name="Brottier P."/>
            <person name="Wincker P."/>
            <person name="Cattolico L."/>
            <person name="Weissenbach J."/>
            <person name="Saurin W."/>
            <person name="Quetier F."/>
            <person name="Schaefer M."/>
            <person name="Mueller-Auer S."/>
            <person name="Gabel C."/>
            <person name="Fuchs M."/>
            <person name="Benes V."/>
            <person name="Wurmbach E."/>
            <person name="Drzonek H."/>
            <person name="Erfle H."/>
            <person name="Jordan N."/>
            <person name="Bangert S."/>
            <person name="Wiedelmann R."/>
            <person name="Kranz H."/>
            <person name="Voss H."/>
            <person name="Holland R."/>
            <person name="Brandt P."/>
            <person name="Nyakatura G."/>
            <person name="Vezzi A."/>
            <person name="D'Angelo M."/>
            <person name="Pallavicini A."/>
            <person name="Toppo S."/>
            <person name="Simionati B."/>
            <person name="Conrad A."/>
            <person name="Hornischer K."/>
            <person name="Kauer G."/>
            <person name="Loehnert T.-H."/>
            <person name="Nordsiek G."/>
            <person name="Reichelt J."/>
            <person name="Scharfe M."/>
            <person name="Schoen O."/>
            <person name="Bargues M."/>
            <person name="Terol J."/>
            <person name="Climent J."/>
            <person name="Navarro P."/>
            <person name="Collado C."/>
            <person name="Perez-Perez A."/>
            <person name="Ottenwaelder B."/>
            <person name="Duchemin D."/>
            <person name="Cooke R."/>
            <person name="Laudie M."/>
            <person name="Berger-Llauro C."/>
            <person name="Purnelle B."/>
            <person name="Masuy D."/>
            <person name="de Haan M."/>
            <person name="Maarse A.C."/>
            <person name="Alcaraz J.-P."/>
            <person name="Cottet A."/>
            <person name="Casacuberta E."/>
            <person name="Monfort A."/>
            <person name="Argiriou A."/>
            <person name="Flores M."/>
            <person name="Liguori R."/>
            <person name="Vitale D."/>
            <person name="Mannhaupt G."/>
            <person name="Haase D."/>
            <person name="Schoof H."/>
            <person name="Rudd S."/>
            <person name="Zaccaria P."/>
            <person name="Mewes H.-W."/>
            <person name="Mayer K.F.X."/>
            <person name="Kaul S."/>
            <person name="Town C.D."/>
            <person name="Koo H.L."/>
            <person name="Tallon L.J."/>
            <person name="Jenkins J."/>
            <person name="Rooney T."/>
            <person name="Rizzo M."/>
            <person name="Walts A."/>
            <person name="Utterback T."/>
            <person name="Fujii C.Y."/>
            <person name="Shea T.P."/>
            <person name="Creasy T.H."/>
            <person name="Haas B."/>
            <person name="Maiti R."/>
            <person name="Wu D."/>
            <person name="Peterson J."/>
            <person name="Van Aken S."/>
            <person name="Pai G."/>
            <person name="Militscher J."/>
            <person name="Sellers P."/>
            <person name="Gill J.E."/>
            <person name="Feldblyum T.V."/>
            <person name="Preuss D."/>
            <person name="Lin X."/>
            <person name="Nierman W.C."/>
            <person name="Salzberg S.L."/>
            <person name="White O."/>
            <person name="Venter J.C."/>
            <person name="Fraser C.M."/>
            <person name="Kaneko T."/>
            <person name="Nakamura Y."/>
            <person name="Sato S."/>
            <person name="Kato T."/>
            <person name="Asamizu E."/>
            <person name="Sasamoto S."/>
            <person name="Kimura T."/>
            <person name="Idesawa K."/>
            <person name="Kawashima K."/>
            <person name="Kishida Y."/>
            <person name="Kiyokawa C."/>
            <person name="Kohara M."/>
            <person name="Matsumoto M."/>
            <person name="Matsuno A."/>
            <person name="Muraki A."/>
            <person name="Nakayama S."/>
            <person name="Nakazaki N."/>
            <person name="Shinpo S."/>
            <person name="Takeuchi C."/>
            <person name="Wada T."/>
            <person name="Watanabe A."/>
            <person name="Yamada M."/>
            <person name="Yasuda M."/>
            <person name="Tabata S."/>
        </authorList>
    </citation>
    <scope>NUCLEOTIDE SEQUENCE [LARGE SCALE GENOMIC DNA]</scope>
    <source>
        <strain>cv. Columbia</strain>
    </source>
</reference>
<reference key="2">
    <citation type="journal article" date="2017" name="Plant J.">
        <title>Araport11: a complete reannotation of the Arabidopsis thaliana reference genome.</title>
        <authorList>
            <person name="Cheng C.Y."/>
            <person name="Krishnakumar V."/>
            <person name="Chan A.P."/>
            <person name="Thibaud-Nissen F."/>
            <person name="Schobel S."/>
            <person name="Town C.D."/>
        </authorList>
    </citation>
    <scope>GENOME REANNOTATION</scope>
    <source>
        <strain>cv. Columbia</strain>
    </source>
</reference>
<reference key="3">
    <citation type="journal article" date="2003" name="Science">
        <title>Empirical analysis of transcriptional activity in the Arabidopsis genome.</title>
        <authorList>
            <person name="Yamada K."/>
            <person name="Lim J."/>
            <person name="Dale J.M."/>
            <person name="Chen H."/>
            <person name="Shinn P."/>
            <person name="Palm C.J."/>
            <person name="Southwick A.M."/>
            <person name="Wu H.C."/>
            <person name="Kim C.J."/>
            <person name="Nguyen M."/>
            <person name="Pham P.K."/>
            <person name="Cheuk R.F."/>
            <person name="Karlin-Newmann G."/>
            <person name="Liu S.X."/>
            <person name="Lam B."/>
            <person name="Sakano H."/>
            <person name="Wu T."/>
            <person name="Yu G."/>
            <person name="Miranda M."/>
            <person name="Quach H.L."/>
            <person name="Tripp M."/>
            <person name="Chang C.H."/>
            <person name="Lee J.M."/>
            <person name="Toriumi M.J."/>
            <person name="Chan M.M."/>
            <person name="Tang C.C."/>
            <person name="Onodera C.S."/>
            <person name="Deng J.M."/>
            <person name="Akiyama K."/>
            <person name="Ansari Y."/>
            <person name="Arakawa T."/>
            <person name="Banh J."/>
            <person name="Banno F."/>
            <person name="Bowser L."/>
            <person name="Brooks S.Y."/>
            <person name="Carninci P."/>
            <person name="Chao Q."/>
            <person name="Choy N."/>
            <person name="Enju A."/>
            <person name="Goldsmith A.D."/>
            <person name="Gurjal M."/>
            <person name="Hansen N.F."/>
            <person name="Hayashizaki Y."/>
            <person name="Johnson-Hopson C."/>
            <person name="Hsuan V.W."/>
            <person name="Iida K."/>
            <person name="Karnes M."/>
            <person name="Khan S."/>
            <person name="Koesema E."/>
            <person name="Ishida J."/>
            <person name="Jiang P.X."/>
            <person name="Jones T."/>
            <person name="Kawai J."/>
            <person name="Kamiya A."/>
            <person name="Meyers C."/>
            <person name="Nakajima M."/>
            <person name="Narusaka M."/>
            <person name="Seki M."/>
            <person name="Sakurai T."/>
            <person name="Satou M."/>
            <person name="Tamse R."/>
            <person name="Vaysberg M."/>
            <person name="Wallender E.K."/>
            <person name="Wong C."/>
            <person name="Yamamura Y."/>
            <person name="Yuan S."/>
            <person name="Shinozaki K."/>
            <person name="Davis R.W."/>
            <person name="Theologis A."/>
            <person name="Ecker J.R."/>
        </authorList>
    </citation>
    <scope>NUCLEOTIDE SEQUENCE [LARGE SCALE MRNA]</scope>
    <source>
        <strain>cv. Columbia</strain>
    </source>
</reference>
<reference key="4">
    <citation type="submission" date="2002-03" db="EMBL/GenBank/DDBJ databases">
        <title>Full-length cDNA from Arabidopsis thaliana.</title>
        <authorList>
            <person name="Brover V.V."/>
            <person name="Troukhan M.E."/>
            <person name="Alexandrov N.A."/>
            <person name="Lu Y.-P."/>
            <person name="Flavell R.B."/>
            <person name="Feldmann K.A."/>
        </authorList>
    </citation>
    <scope>NUCLEOTIDE SEQUENCE [LARGE SCALE MRNA]</scope>
</reference>
<reference key="5">
    <citation type="journal article" date="2001" name="Plant Physiol.">
        <title>The organization of cytoplasmic ribosomal protein genes in the Arabidopsis genome.</title>
        <authorList>
            <person name="Barakat A."/>
            <person name="Szick-Miranda K."/>
            <person name="Chang I.-F."/>
            <person name="Guyot R."/>
            <person name="Blanc G."/>
            <person name="Cooke R."/>
            <person name="Delseny M."/>
            <person name="Bailey-Serres J."/>
        </authorList>
    </citation>
    <scope>GENE FAMILY ORGANIZATION</scope>
    <scope>NOMENCLATURE</scope>
</reference>
<reference key="6">
    <citation type="journal article" date="2023" name="Plant Cell">
        <title>An updated nomenclature for plant ribosomal protein genes.</title>
        <authorList>
            <person name="Scarpin M.R."/>
            <person name="Busche M."/>
            <person name="Martinez R.E."/>
            <person name="Harper L.C."/>
            <person name="Reiser L."/>
            <person name="Szakonyi D."/>
            <person name="Merchante C."/>
            <person name="Lan T."/>
            <person name="Xiong W."/>
            <person name="Mo B."/>
            <person name="Tang G."/>
            <person name="Chen X."/>
            <person name="Bailey-Serres J."/>
            <person name="Browning K.S."/>
            <person name="Brunkard J.O."/>
        </authorList>
    </citation>
    <scope>NOMENCLATURE</scope>
</reference>
<name>RL222_ARATH</name>
<organism>
    <name type="scientific">Arabidopsis thaliana</name>
    <name type="common">Mouse-ear cress</name>
    <dbReference type="NCBI Taxonomy" id="3702"/>
    <lineage>
        <taxon>Eukaryota</taxon>
        <taxon>Viridiplantae</taxon>
        <taxon>Streptophyta</taxon>
        <taxon>Embryophyta</taxon>
        <taxon>Tracheophyta</taxon>
        <taxon>Spermatophyta</taxon>
        <taxon>Magnoliopsida</taxon>
        <taxon>eudicotyledons</taxon>
        <taxon>Gunneridae</taxon>
        <taxon>Pentapetalae</taxon>
        <taxon>rosids</taxon>
        <taxon>malvids</taxon>
        <taxon>Brassicales</taxon>
        <taxon>Brassicaceae</taxon>
        <taxon>Camelineae</taxon>
        <taxon>Arabidopsis</taxon>
    </lineage>
</organism>
<gene>
    <name type="primary">RPL22B</name>
    <name type="ordered locus">At3g05560</name>
    <name type="ORF">F18C1.17</name>
</gene>
<comment type="similarity">
    <text evidence="2">Belongs to the eukaryotic ribosomal protein eL22 family.</text>
</comment>
<proteinExistence type="evidence at transcript level"/>
<evidence type="ECO:0000303" key="1">
    <source>
    </source>
</evidence>
<evidence type="ECO:0000305" key="2"/>
<dbReference type="EMBL" id="AC011620">
    <property type="protein sequence ID" value="AAF26141.1"/>
    <property type="molecule type" value="Genomic_DNA"/>
</dbReference>
<dbReference type="EMBL" id="CP002686">
    <property type="protein sequence ID" value="AEE74258.1"/>
    <property type="molecule type" value="Genomic_DNA"/>
</dbReference>
<dbReference type="EMBL" id="CP002686">
    <property type="protein sequence ID" value="AEE74259.1"/>
    <property type="molecule type" value="Genomic_DNA"/>
</dbReference>
<dbReference type="EMBL" id="CP002686">
    <property type="protein sequence ID" value="AEE74260.1"/>
    <property type="molecule type" value="Genomic_DNA"/>
</dbReference>
<dbReference type="EMBL" id="AY065359">
    <property type="protein sequence ID" value="AAL38800.1"/>
    <property type="molecule type" value="mRNA"/>
</dbReference>
<dbReference type="EMBL" id="AY096581">
    <property type="protein sequence ID" value="AAM20231.1"/>
    <property type="molecule type" value="mRNA"/>
</dbReference>
<dbReference type="EMBL" id="BT002469">
    <property type="protein sequence ID" value="AAO00829.1"/>
    <property type="molecule type" value="mRNA"/>
</dbReference>
<dbReference type="EMBL" id="BT006523">
    <property type="protein sequence ID" value="AAP21331.1"/>
    <property type="molecule type" value="mRNA"/>
</dbReference>
<dbReference type="EMBL" id="AY088594">
    <property type="protein sequence ID" value="AAM66123.1"/>
    <property type="molecule type" value="mRNA"/>
</dbReference>
<dbReference type="RefSeq" id="NP_001078112.1">
    <property type="nucleotide sequence ID" value="NM_001084643.1"/>
</dbReference>
<dbReference type="RefSeq" id="NP_187207.1">
    <property type="nucleotide sequence ID" value="NM_111429.5"/>
</dbReference>
<dbReference type="RefSeq" id="NP_974229.1">
    <property type="nucleotide sequence ID" value="NM_202500.2"/>
</dbReference>
<dbReference type="SMR" id="Q9M9W1"/>
<dbReference type="BioGRID" id="5057">
    <property type="interactions" value="143"/>
</dbReference>
<dbReference type="FunCoup" id="Q9M9W1">
    <property type="interactions" value="2711"/>
</dbReference>
<dbReference type="STRING" id="3702.Q9M9W1"/>
<dbReference type="MetOSite" id="Q9M9W1"/>
<dbReference type="PaxDb" id="3702-AT3G05560.3"/>
<dbReference type="ProteomicsDB" id="226002"/>
<dbReference type="EnsemblPlants" id="AT3G05560.1">
    <property type="protein sequence ID" value="AT3G05560.1"/>
    <property type="gene ID" value="AT3G05560"/>
</dbReference>
<dbReference type="EnsemblPlants" id="AT3G05560.2">
    <property type="protein sequence ID" value="AT3G05560.2"/>
    <property type="gene ID" value="AT3G05560"/>
</dbReference>
<dbReference type="EnsemblPlants" id="AT3G05560.3">
    <property type="protein sequence ID" value="AT3G05560.3"/>
    <property type="gene ID" value="AT3G05560"/>
</dbReference>
<dbReference type="GeneID" id="819722"/>
<dbReference type="Gramene" id="AT3G05560.1">
    <property type="protein sequence ID" value="AT3G05560.1"/>
    <property type="gene ID" value="AT3G05560"/>
</dbReference>
<dbReference type="Gramene" id="AT3G05560.2">
    <property type="protein sequence ID" value="AT3G05560.2"/>
    <property type="gene ID" value="AT3G05560"/>
</dbReference>
<dbReference type="Gramene" id="AT3G05560.3">
    <property type="protein sequence ID" value="AT3G05560.3"/>
    <property type="gene ID" value="AT3G05560"/>
</dbReference>
<dbReference type="KEGG" id="ath:AT3G05560"/>
<dbReference type="Araport" id="AT3G05560"/>
<dbReference type="TAIR" id="AT3G05560"/>
<dbReference type="eggNOG" id="KOG3434">
    <property type="taxonomic scope" value="Eukaryota"/>
</dbReference>
<dbReference type="HOGENOM" id="CLU_105624_0_1_1"/>
<dbReference type="InParanoid" id="Q9M9W1"/>
<dbReference type="OMA" id="NSFTIDC"/>
<dbReference type="PhylomeDB" id="Q9M9W1"/>
<dbReference type="CD-CODE" id="4299E36E">
    <property type="entry name" value="Nucleolus"/>
</dbReference>
<dbReference type="PRO" id="PR:Q9M9W1"/>
<dbReference type="Proteomes" id="UP000006548">
    <property type="component" value="Chromosome 3"/>
</dbReference>
<dbReference type="ExpressionAtlas" id="Q9M9W1">
    <property type="expression patterns" value="baseline and differential"/>
</dbReference>
<dbReference type="GO" id="GO:0005829">
    <property type="term" value="C:cytosol"/>
    <property type="evidence" value="ECO:0007005"/>
    <property type="project" value="TAIR"/>
</dbReference>
<dbReference type="GO" id="GO:0022625">
    <property type="term" value="C:cytosolic large ribosomal subunit"/>
    <property type="evidence" value="ECO:0007005"/>
    <property type="project" value="TAIR"/>
</dbReference>
<dbReference type="GO" id="GO:0022626">
    <property type="term" value="C:cytosolic ribosome"/>
    <property type="evidence" value="ECO:0007005"/>
    <property type="project" value="TAIR"/>
</dbReference>
<dbReference type="GO" id="GO:0005730">
    <property type="term" value="C:nucleolus"/>
    <property type="evidence" value="ECO:0007005"/>
    <property type="project" value="TAIR"/>
</dbReference>
<dbReference type="GO" id="GO:0009506">
    <property type="term" value="C:plasmodesma"/>
    <property type="evidence" value="ECO:0007005"/>
    <property type="project" value="TAIR"/>
</dbReference>
<dbReference type="GO" id="GO:0003729">
    <property type="term" value="F:mRNA binding"/>
    <property type="evidence" value="ECO:0000314"/>
    <property type="project" value="TAIR"/>
</dbReference>
<dbReference type="GO" id="GO:0003735">
    <property type="term" value="F:structural constituent of ribosome"/>
    <property type="evidence" value="ECO:0000314"/>
    <property type="project" value="CAFA"/>
</dbReference>
<dbReference type="GO" id="GO:0006412">
    <property type="term" value="P:translation"/>
    <property type="evidence" value="ECO:0007669"/>
    <property type="project" value="InterPro"/>
</dbReference>
<dbReference type="FunFam" id="3.30.1360.210:FF:000002">
    <property type="entry name" value="60S ribosomal protein L22-2"/>
    <property type="match status" value="1"/>
</dbReference>
<dbReference type="Gene3D" id="3.30.1360.210">
    <property type="match status" value="1"/>
</dbReference>
<dbReference type="InterPro" id="IPR002671">
    <property type="entry name" value="Ribosomal_eL22"/>
</dbReference>
<dbReference type="InterPro" id="IPR038526">
    <property type="entry name" value="Ribosomal_eL22_sf"/>
</dbReference>
<dbReference type="PANTHER" id="PTHR10064">
    <property type="entry name" value="60S RIBOSOMAL PROTEIN L22"/>
    <property type="match status" value="1"/>
</dbReference>
<dbReference type="PANTHER" id="PTHR10064:SF36">
    <property type="entry name" value="LARGE RIBOSOMAL SUBUNIT PROTEIN EL22Z"/>
    <property type="match status" value="1"/>
</dbReference>
<dbReference type="Pfam" id="PF01776">
    <property type="entry name" value="Ribosomal_L22e"/>
    <property type="match status" value="1"/>
</dbReference>
<accession>Q9M9W1</accession>